<gene>
    <name evidence="1" type="primary">tsf</name>
    <name type="ordered locus">C8J_1125</name>
</gene>
<name>EFTS_CAMJ8</name>
<dbReference type="EMBL" id="CP000814">
    <property type="protein sequence ID" value="ABV52724.1"/>
    <property type="molecule type" value="Genomic_DNA"/>
</dbReference>
<dbReference type="RefSeq" id="WP_002866193.1">
    <property type="nucleotide sequence ID" value="NC_009839.1"/>
</dbReference>
<dbReference type="SMR" id="A8FMN7"/>
<dbReference type="KEGG" id="cju:C8J_1125"/>
<dbReference type="HOGENOM" id="CLU_047155_0_1_7"/>
<dbReference type="GO" id="GO:0005737">
    <property type="term" value="C:cytoplasm"/>
    <property type="evidence" value="ECO:0007669"/>
    <property type="project" value="UniProtKB-SubCell"/>
</dbReference>
<dbReference type="GO" id="GO:0003746">
    <property type="term" value="F:translation elongation factor activity"/>
    <property type="evidence" value="ECO:0007669"/>
    <property type="project" value="UniProtKB-UniRule"/>
</dbReference>
<dbReference type="CDD" id="cd14275">
    <property type="entry name" value="UBA_EF-Ts"/>
    <property type="match status" value="1"/>
</dbReference>
<dbReference type="FunFam" id="1.10.8.10:FF:000001">
    <property type="entry name" value="Elongation factor Ts"/>
    <property type="match status" value="1"/>
</dbReference>
<dbReference type="Gene3D" id="1.10.286.20">
    <property type="match status" value="1"/>
</dbReference>
<dbReference type="Gene3D" id="1.10.8.10">
    <property type="entry name" value="DNA helicase RuvA subunit, C-terminal domain"/>
    <property type="match status" value="1"/>
</dbReference>
<dbReference type="Gene3D" id="3.30.479.20">
    <property type="entry name" value="Elongation factor Ts, dimerisation domain"/>
    <property type="match status" value="3"/>
</dbReference>
<dbReference type="HAMAP" id="MF_00050">
    <property type="entry name" value="EF_Ts"/>
    <property type="match status" value="1"/>
</dbReference>
<dbReference type="InterPro" id="IPR036402">
    <property type="entry name" value="EF-Ts_dimer_sf"/>
</dbReference>
<dbReference type="InterPro" id="IPR001816">
    <property type="entry name" value="Transl_elong_EFTs/EF1B"/>
</dbReference>
<dbReference type="InterPro" id="IPR014039">
    <property type="entry name" value="Transl_elong_EFTs/EF1B_dimer"/>
</dbReference>
<dbReference type="InterPro" id="IPR018101">
    <property type="entry name" value="Transl_elong_Ts_CS"/>
</dbReference>
<dbReference type="InterPro" id="IPR009060">
    <property type="entry name" value="UBA-like_sf"/>
</dbReference>
<dbReference type="NCBIfam" id="TIGR00116">
    <property type="entry name" value="tsf"/>
    <property type="match status" value="1"/>
</dbReference>
<dbReference type="PANTHER" id="PTHR11741">
    <property type="entry name" value="ELONGATION FACTOR TS"/>
    <property type="match status" value="1"/>
</dbReference>
<dbReference type="PANTHER" id="PTHR11741:SF0">
    <property type="entry name" value="ELONGATION FACTOR TS, MITOCHONDRIAL"/>
    <property type="match status" value="1"/>
</dbReference>
<dbReference type="Pfam" id="PF00889">
    <property type="entry name" value="EF_TS"/>
    <property type="match status" value="2"/>
</dbReference>
<dbReference type="SUPFAM" id="SSF54713">
    <property type="entry name" value="Elongation factor Ts (EF-Ts), dimerisation domain"/>
    <property type="match status" value="3"/>
</dbReference>
<dbReference type="SUPFAM" id="SSF46934">
    <property type="entry name" value="UBA-like"/>
    <property type="match status" value="1"/>
</dbReference>
<dbReference type="PROSITE" id="PS01126">
    <property type="entry name" value="EF_TS_1"/>
    <property type="match status" value="1"/>
</dbReference>
<dbReference type="PROSITE" id="PS01127">
    <property type="entry name" value="EF_TS_2"/>
    <property type="match status" value="1"/>
</dbReference>
<comment type="function">
    <text evidence="1">Associates with the EF-Tu.GDP complex and induces the exchange of GDP to GTP. It remains bound to the aminoacyl-tRNA.EF-Tu.GTP complex up to the GTP hydrolysis stage on the ribosome.</text>
</comment>
<comment type="subcellular location">
    <subcellularLocation>
        <location evidence="1">Cytoplasm</location>
    </subcellularLocation>
</comment>
<comment type="similarity">
    <text evidence="1">Belongs to the EF-Ts family.</text>
</comment>
<reference key="1">
    <citation type="journal article" date="2007" name="J. Bacteriol.">
        <title>The complete genome sequence of Campylobacter jejuni strain 81116 (NCTC11828).</title>
        <authorList>
            <person name="Pearson B.M."/>
            <person name="Gaskin D.J.H."/>
            <person name="Segers R.P.A.M."/>
            <person name="Wells J.M."/>
            <person name="Nuijten P.J.M."/>
            <person name="van Vliet A.H.M."/>
        </authorList>
    </citation>
    <scope>NUCLEOTIDE SEQUENCE [LARGE SCALE GENOMIC DNA]</scope>
    <source>
        <strain>81116 / NCTC 11828</strain>
    </source>
</reference>
<proteinExistence type="inferred from homology"/>
<feature type="chain" id="PRO_1000071121" description="Elongation factor Ts">
    <location>
        <begin position="1"/>
        <end position="357"/>
    </location>
</feature>
<feature type="region of interest" description="Involved in Mg(2+) ion dislocation from EF-Tu" evidence="1">
    <location>
        <begin position="82"/>
        <end position="85"/>
    </location>
</feature>
<protein>
    <recommendedName>
        <fullName evidence="1">Elongation factor Ts</fullName>
        <shortName evidence="1">EF-Ts</shortName>
    </recommendedName>
</protein>
<evidence type="ECO:0000255" key="1">
    <source>
        <dbReference type="HAMAP-Rule" id="MF_00050"/>
    </source>
</evidence>
<accession>A8FMN7</accession>
<sequence length="357" mass="39537">MAEITAAMVKELRESTGAGMMDCKNALSETNGDFDKAVQLLREKGLGKAAKKADRLAAEGLVSVKVSDDFTSATVSEINSETDFVAKNDQFIALTKDTTAHIQSNSLQSVEELHSSIINGVKFEEYLKSQIATIGENLVVRRFATLKAGANGVVNGYIHTNGRVGVVIAAACDSAEVASKSRDLLRQICMHIAAMRPSYLSYEDLDMTFVENEYKALVAELEKENEERRRLKDPNKPEHKIPQFASRKQLSDAILKEAEEKIKEELKAQGKPEKIWDNIIPGKMNSFIADNSQLDSKLTLMGQFYVMDDKKTVEQVIAEKEKEFGGKIKIVEFICFEVGEGLEKKTEDFAAEVAAQL</sequence>
<organism>
    <name type="scientific">Campylobacter jejuni subsp. jejuni serotype O:6 (strain 81116 / NCTC 11828)</name>
    <dbReference type="NCBI Taxonomy" id="407148"/>
    <lineage>
        <taxon>Bacteria</taxon>
        <taxon>Pseudomonadati</taxon>
        <taxon>Campylobacterota</taxon>
        <taxon>Epsilonproteobacteria</taxon>
        <taxon>Campylobacterales</taxon>
        <taxon>Campylobacteraceae</taxon>
        <taxon>Campylobacter</taxon>
    </lineage>
</organism>
<keyword id="KW-0963">Cytoplasm</keyword>
<keyword id="KW-0251">Elongation factor</keyword>
<keyword id="KW-0648">Protein biosynthesis</keyword>